<sequence>MDVLELLRVSGSNMYYSTFLADAWCYYISNQITMTMYLYCALGVLSMLFIGWFVYFKRLARLRLRHEIARSLSAVTMASGGDLRGPRFRKRDKMLFYGRRMLRKMKNVSGQMYSSGKGYKRRAVIRFARRILQLRRENMPLEVRTVEPPAEYLEETMEGSDRVPPDALYMLQSIRIFGHFEKPIFLRLCKHTQLLELMGGDYLFKITDPDDSVYIVQSGMINVYISNADGSTLSLKTVRKGESVTSLLSFIDVLSGNPSYYKTVTAKAIEKSVVIRLPMAAFQEVFKDSPDVMIRVIQVIMIRLQRVLFTALRNYLGLNAELVQNHMRFKGSSQGAGPSVYCSQTTRQATGSASATATAAAASGTAGSTHTAVPRPASSLSRYSQDEQHTLSDPNPGIPNLELSGDSVNTLFGEVNGGARLNSYPPLYHQRESDGNLSTRRGSITQQEQPEVGPVPSIDMRLVKSSAVDSLRKELGLPEQDAHIIDPFVEVREMEPNVTLITEGNADDVCVWFVMTGTLAVYQGNADATRIKQDKTDLLIHYVHPGEIVGGLAMLTGEASAYTIRSRNHSRVAFIRRAAIYQIMRQRPRIVLDLGNGVVRRLSPLVRQCDYALDWIFLESGRALYRQDESSDSTYIVLSGRMRSVITHPGGKKEIVGEYGKGDLVGIVEMITETSRTTTVMAVRDSELAKLPEGLFNAIKLRYPIVVTKLISFLSHRFLGSMQTRTTTGAPGAPVEANPVTHKYSTVALVPITDDVPLTPFTYELYHSLCAIGPVLRLTSDLARKQLGMNIFDASNEYRLTSWLAQQEDRNIITLYQCDNALSPWTQRCMRQADVVLIVGLGDHSHLVGKFEREIDRLALRTQKELVLLYPETASSKPANTLSWLNARPWVTKHHHVLCVKRIFTRKSQYRINDLYSRVLLSEPNMHSDFSRLARWLTGNSIGLVLGGGGARGAAHIGMLKAIQEAGIPIDMVGGVSIGALMGALWCSERNITTVTQKAREWSKKMTKWFLQLLDLTYPITSMFSGREFNKTIHETFGDVNIEDLWIPYFTLTTDITASCHRIHTNGSLWRYVRSSMSLSGYMPPLCDPKDGHLLLDGGYVNNLPGHLWRYCRASMSIAGVFPPFCDYRDGHLLLDGCYTNNVPADVMHNLGAAHIIAIDVGSQDDTDLTNYGDDLSGWWLLYKKWNPFTAPVKVPDLPDIQSRLAYVSCVRQLEEVKNSDYCEYIRPLINKYQTLSCAGCPETYGLNPSDLFSEDEDCDGYISEPTTLNTDVRRYQVPRGGNSLSLSETEMDMDSDVEMDLKMERKMDKATQSTPPLQSKAQILRRKHSKEEARHEWEIKREQKQELAREQELERERELSQKGTTAGATGYTPNAVIATQTSLIFMDEEDEMDKKKTKDNDRDEVRGSAEDTGKEKEEDKENRSNTNNETKNYL</sequence>
<proteinExistence type="inferred from homology"/>
<feature type="chain" id="PRO_0000389224" description="Neuropathy target esterase sws">
    <location>
        <begin position="1"/>
        <end position="1435"/>
    </location>
</feature>
<feature type="topological domain" description="Lumenal" evidence="3">
    <location>
        <begin position="1"/>
        <end position="35"/>
    </location>
</feature>
<feature type="transmembrane region" description="Helical" evidence="3">
    <location>
        <begin position="36"/>
        <end position="56"/>
    </location>
</feature>
<feature type="topological domain" description="Cytoplasmic" evidence="3">
    <location>
        <begin position="57"/>
        <end position="1435"/>
    </location>
</feature>
<feature type="domain" description="PNPLA" evidence="4">
    <location>
        <begin position="944"/>
        <end position="1110"/>
    </location>
</feature>
<feature type="region of interest" description="Disordered" evidence="5">
    <location>
        <begin position="361"/>
        <end position="405"/>
    </location>
</feature>
<feature type="region of interest" description="Disordered" evidence="5">
    <location>
        <begin position="422"/>
        <end position="452"/>
    </location>
</feature>
<feature type="region of interest" description="Disordered" evidence="5">
    <location>
        <begin position="1308"/>
        <end position="1435"/>
    </location>
</feature>
<feature type="short sequence motif" description="GXGXXG" evidence="4">
    <location>
        <begin position="948"/>
        <end position="953"/>
    </location>
</feature>
<feature type="short sequence motif" description="GXSXG" evidence="4">
    <location>
        <begin position="975"/>
        <end position="979"/>
    </location>
</feature>
<feature type="short sequence motif" description="DGA/G" evidence="4">
    <location>
        <begin position="1097"/>
        <end position="1099"/>
    </location>
</feature>
<feature type="compositionally biased region" description="Low complexity" evidence="5">
    <location>
        <begin position="361"/>
        <end position="372"/>
    </location>
</feature>
<feature type="compositionally biased region" description="Polar residues" evidence="5">
    <location>
        <begin position="435"/>
        <end position="449"/>
    </location>
</feature>
<feature type="compositionally biased region" description="Polar residues" evidence="5">
    <location>
        <begin position="1311"/>
        <end position="1322"/>
    </location>
</feature>
<feature type="compositionally biased region" description="Basic and acidic residues" evidence="5">
    <location>
        <begin position="1330"/>
        <end position="1361"/>
    </location>
</feature>
<feature type="compositionally biased region" description="Basic and acidic residues" evidence="5">
    <location>
        <begin position="1393"/>
        <end position="1424"/>
    </location>
</feature>
<feature type="compositionally biased region" description="Polar residues" evidence="5">
    <location>
        <begin position="1425"/>
        <end position="1435"/>
    </location>
</feature>
<feature type="active site" description="Nucleophile" evidence="4">
    <location>
        <position position="977"/>
    </location>
</feature>
<feature type="active site" description="Proton acceptor" evidence="4">
    <location>
        <position position="1097"/>
    </location>
</feature>
<feature type="binding site" evidence="3">
    <location>
        <begin position="176"/>
        <end position="303"/>
    </location>
    <ligand>
        <name>a nucleoside 3',5'-cyclic phosphate</name>
        <dbReference type="ChEBI" id="CHEBI:58464"/>
        <label>1</label>
    </ligand>
</feature>
<feature type="binding site" evidence="3">
    <location>
        <begin position="474"/>
        <end position="601"/>
    </location>
    <ligand>
        <name>a nucleoside 3',5'-cyclic phosphate</name>
        <dbReference type="ChEBI" id="CHEBI:58464"/>
        <label>2</label>
    </ligand>
</feature>
<feature type="binding site" evidence="3">
    <location>
        <begin position="590"/>
        <end position="717"/>
    </location>
    <ligand>
        <name>a nucleoside 3',5'-cyclic phosphate</name>
        <dbReference type="ChEBI" id="CHEBI:58464"/>
        <label>3</label>
    </ligand>
</feature>
<feature type="modified residue" description="Phosphoserine" evidence="2">
    <location>
        <position position="443"/>
    </location>
</feature>
<evidence type="ECO:0000250" key="1"/>
<evidence type="ECO:0000250" key="2">
    <source>
        <dbReference type="UniProtKB" id="Q9U969"/>
    </source>
</evidence>
<evidence type="ECO:0000255" key="3"/>
<evidence type="ECO:0000255" key="4">
    <source>
        <dbReference type="PROSITE-ProRule" id="PRU01161"/>
    </source>
</evidence>
<evidence type="ECO:0000256" key="5">
    <source>
        <dbReference type="SAM" id="MobiDB-lite"/>
    </source>
</evidence>
<evidence type="ECO:0000312" key="6">
    <source>
        <dbReference type="EMBL" id="EDW31049.1"/>
    </source>
</evidence>
<keyword id="KW-0217">Developmental protein</keyword>
<keyword id="KW-0256">Endoplasmic reticulum</keyword>
<keyword id="KW-0378">Hydrolase</keyword>
<keyword id="KW-0442">Lipid degradation</keyword>
<keyword id="KW-0443">Lipid metabolism</keyword>
<keyword id="KW-0472">Membrane</keyword>
<keyword id="KW-0524">Neurogenesis</keyword>
<keyword id="KW-0597">Phosphoprotein</keyword>
<keyword id="KW-1185">Reference proteome</keyword>
<keyword id="KW-0812">Transmembrane</keyword>
<keyword id="KW-1133">Transmembrane helix</keyword>
<comment type="function">
    <text evidence="2">Phospholipase B that deacylates intracellular phosphatidylcholine (PtdCho), generating glycerophosphocholine (GroPtdCho). This deacylation occurs at both sn-2 and sn-1 positions of PtdCho. Its specific chemical modification by certain organophosphorus (OP) compounds leads to distal axonopathy. Plays a role in the signaling mechanism between neurons and glia that regulates glia wrapping during development of the adult brain. Essential for membrane lipid homeostasis and cell survival in both neurons and glia of the adult brain (By similarity).</text>
</comment>
<comment type="catalytic activity">
    <reaction evidence="2">
        <text>a 1-acyl-sn-glycero-3-phosphocholine + H2O = sn-glycerol 3-phosphocholine + a fatty acid + H(+)</text>
        <dbReference type="Rhea" id="RHEA:15177"/>
        <dbReference type="ChEBI" id="CHEBI:15377"/>
        <dbReference type="ChEBI" id="CHEBI:15378"/>
        <dbReference type="ChEBI" id="CHEBI:16870"/>
        <dbReference type="ChEBI" id="CHEBI:28868"/>
        <dbReference type="ChEBI" id="CHEBI:58168"/>
        <dbReference type="EC" id="3.1.1.5"/>
    </reaction>
</comment>
<comment type="subunit">
    <text evidence="1">Interacts with Pka-C3; interaction inhibits the catalytic function of Pka-C3 and the esterase activity of sws.</text>
</comment>
<comment type="subcellular location">
    <subcellularLocation>
        <location evidence="2">Endoplasmic reticulum membrane</location>
        <topology evidence="2">Single-pass type I membrane protein</topology>
    </subcellularLocation>
    <text evidence="2">Sws tethers Pka-C3 to the membrane.</text>
</comment>
<comment type="similarity">
    <text evidence="3">Belongs to the NTE family.</text>
</comment>
<organism>
    <name type="scientific">Drosophila persimilis</name>
    <name type="common">Fruit fly</name>
    <dbReference type="NCBI Taxonomy" id="7234"/>
    <lineage>
        <taxon>Eukaryota</taxon>
        <taxon>Metazoa</taxon>
        <taxon>Ecdysozoa</taxon>
        <taxon>Arthropoda</taxon>
        <taxon>Hexapoda</taxon>
        <taxon>Insecta</taxon>
        <taxon>Pterygota</taxon>
        <taxon>Neoptera</taxon>
        <taxon>Endopterygota</taxon>
        <taxon>Diptera</taxon>
        <taxon>Brachycera</taxon>
        <taxon>Muscomorpha</taxon>
        <taxon>Ephydroidea</taxon>
        <taxon>Drosophilidae</taxon>
        <taxon>Drosophila</taxon>
        <taxon>Sophophora</taxon>
    </lineage>
</organism>
<protein>
    <recommendedName>
        <fullName evidence="2">Neuropathy target esterase sws</fullName>
    </recommendedName>
    <alternativeName>
        <fullName evidence="2">Swiss cheese</fullName>
        <ecNumber>3.1.1.5</ecNumber>
    </alternativeName>
</protein>
<gene>
    <name evidence="2" type="primary">sws</name>
    <name type="ORF">GL15243</name>
</gene>
<reference evidence="6" key="1">
    <citation type="journal article" date="2007" name="Nature">
        <title>Evolution of genes and genomes on the Drosophila phylogeny.</title>
        <authorList>
            <consortium name="Drosophila 12 genomes consortium"/>
        </authorList>
    </citation>
    <scope>NUCLEOTIDE SEQUENCE [LARGE SCALE GENOMIC DNA]</scope>
    <source>
        <strain>MSH-3 / Tucson 14011-0111.49</strain>
    </source>
</reference>
<accession>B4H3U8</accession>
<name>SWS_DROPE</name>
<dbReference type="EC" id="3.1.1.5"/>
<dbReference type="EMBL" id="CH479207">
    <property type="protein sequence ID" value="EDW31049.1"/>
    <property type="molecule type" value="Genomic_DNA"/>
</dbReference>
<dbReference type="RefSeq" id="XP_002025527.1">
    <property type="nucleotide sequence ID" value="XM_002025491.1"/>
</dbReference>
<dbReference type="SMR" id="B4H3U8"/>
<dbReference type="STRING" id="7234.B4H3U8"/>
<dbReference type="EnsemblMetazoa" id="FBtr0180858">
    <property type="protein sequence ID" value="FBpp0179350"/>
    <property type="gene ID" value="FBgn0152847"/>
</dbReference>
<dbReference type="eggNOG" id="KOG2968">
    <property type="taxonomic scope" value="Eukaryota"/>
</dbReference>
<dbReference type="HOGENOM" id="CLU_000960_1_0_1"/>
<dbReference type="OMA" id="GQQEDRH"/>
<dbReference type="OrthoDB" id="421051at2759"/>
<dbReference type="PhylomeDB" id="B4H3U8"/>
<dbReference type="Proteomes" id="UP000008744">
    <property type="component" value="Unassembled WGS sequence"/>
</dbReference>
<dbReference type="GO" id="GO:0005789">
    <property type="term" value="C:endoplasmic reticulum membrane"/>
    <property type="evidence" value="ECO:0000250"/>
    <property type="project" value="UniProtKB"/>
</dbReference>
<dbReference type="GO" id="GO:0005886">
    <property type="term" value="C:plasma membrane"/>
    <property type="evidence" value="ECO:0007669"/>
    <property type="project" value="EnsemblMetazoa"/>
</dbReference>
<dbReference type="GO" id="GO:0004622">
    <property type="term" value="F:lysophospholipase activity"/>
    <property type="evidence" value="ECO:0000250"/>
    <property type="project" value="UniProtKB"/>
</dbReference>
<dbReference type="GO" id="GO:0034236">
    <property type="term" value="F:protein kinase A catalytic subunit binding"/>
    <property type="evidence" value="ECO:0007669"/>
    <property type="project" value="EnsemblMetazoa"/>
</dbReference>
<dbReference type="GO" id="GO:0007272">
    <property type="term" value="P:ensheathment of neurons"/>
    <property type="evidence" value="ECO:0007669"/>
    <property type="project" value="EnsemblMetazoa"/>
</dbReference>
<dbReference type="GO" id="GO:0034349">
    <property type="term" value="P:glial cell apoptotic process"/>
    <property type="evidence" value="ECO:0000250"/>
    <property type="project" value="UniProtKB"/>
</dbReference>
<dbReference type="GO" id="GO:0016042">
    <property type="term" value="P:lipid catabolic process"/>
    <property type="evidence" value="ECO:0007669"/>
    <property type="project" value="UniProtKB-KW"/>
</dbReference>
<dbReference type="GO" id="GO:0006643">
    <property type="term" value="P:membrane lipid metabolic process"/>
    <property type="evidence" value="ECO:0000250"/>
    <property type="project" value="UniProtKB"/>
</dbReference>
<dbReference type="GO" id="GO:0061024">
    <property type="term" value="P:membrane organization"/>
    <property type="evidence" value="ECO:0000250"/>
    <property type="project" value="UniProtKB"/>
</dbReference>
<dbReference type="GO" id="GO:0051402">
    <property type="term" value="P:neuron apoptotic process"/>
    <property type="evidence" value="ECO:0000250"/>
    <property type="project" value="UniProtKB"/>
</dbReference>
<dbReference type="GO" id="GO:0046470">
    <property type="term" value="P:phosphatidylcholine metabolic process"/>
    <property type="evidence" value="ECO:0000250"/>
    <property type="project" value="UniProtKB"/>
</dbReference>
<dbReference type="GO" id="GO:0045494">
    <property type="term" value="P:photoreceptor cell maintenance"/>
    <property type="evidence" value="ECO:0007669"/>
    <property type="project" value="EnsemblMetazoa"/>
</dbReference>
<dbReference type="GO" id="GO:0072657">
    <property type="term" value="P:protein localization to membrane"/>
    <property type="evidence" value="ECO:0007669"/>
    <property type="project" value="EnsemblMetazoa"/>
</dbReference>
<dbReference type="GO" id="GO:0007608">
    <property type="term" value="P:sensory perception of smell"/>
    <property type="evidence" value="ECO:0007669"/>
    <property type="project" value="EnsemblMetazoa"/>
</dbReference>
<dbReference type="CDD" id="cd00038">
    <property type="entry name" value="CAP_ED"/>
    <property type="match status" value="3"/>
</dbReference>
<dbReference type="CDD" id="cd07225">
    <property type="entry name" value="Pat_PNPLA6_PNPLA7"/>
    <property type="match status" value="1"/>
</dbReference>
<dbReference type="FunFam" id="2.60.120.10:FF:000010">
    <property type="entry name" value="neuropathy target esterase isoform X1"/>
    <property type="match status" value="1"/>
</dbReference>
<dbReference type="FunFam" id="2.60.120.10:FF:000122">
    <property type="entry name" value="Neuropathy target esterase sws"/>
    <property type="match status" value="1"/>
</dbReference>
<dbReference type="FunFam" id="2.60.120.10:FF:000135">
    <property type="entry name" value="Neuropathy target esterase sws"/>
    <property type="match status" value="1"/>
</dbReference>
<dbReference type="FunFam" id="3.40.1090.10:FF:000022">
    <property type="entry name" value="Neuropathy target esterase sws"/>
    <property type="match status" value="1"/>
</dbReference>
<dbReference type="FunFam" id="3.40.1090.10:FF:000033">
    <property type="entry name" value="Neuropathy target esterase sws"/>
    <property type="match status" value="1"/>
</dbReference>
<dbReference type="Gene3D" id="3.40.1090.10">
    <property type="entry name" value="Cytosolic phospholipase A2 catalytic domain"/>
    <property type="match status" value="2"/>
</dbReference>
<dbReference type="Gene3D" id="2.60.120.10">
    <property type="entry name" value="Jelly Rolls"/>
    <property type="match status" value="3"/>
</dbReference>
<dbReference type="InterPro" id="IPR016035">
    <property type="entry name" value="Acyl_Trfase/lysoPLipase"/>
</dbReference>
<dbReference type="InterPro" id="IPR000595">
    <property type="entry name" value="cNMP-bd_dom"/>
</dbReference>
<dbReference type="InterPro" id="IPR018490">
    <property type="entry name" value="cNMP-bd_dom_sf"/>
</dbReference>
<dbReference type="InterPro" id="IPR001423">
    <property type="entry name" value="LysoPLipase_patatin_CS"/>
</dbReference>
<dbReference type="InterPro" id="IPR050301">
    <property type="entry name" value="NTE"/>
</dbReference>
<dbReference type="InterPro" id="IPR056556">
    <property type="entry name" value="NTE1_P-loop_dom"/>
</dbReference>
<dbReference type="InterPro" id="IPR002641">
    <property type="entry name" value="PNPLA_dom"/>
</dbReference>
<dbReference type="InterPro" id="IPR014710">
    <property type="entry name" value="RmlC-like_jellyroll"/>
</dbReference>
<dbReference type="PANTHER" id="PTHR14226:SF29">
    <property type="entry name" value="NEUROPATHY TARGET ESTERASE SWS"/>
    <property type="match status" value="1"/>
</dbReference>
<dbReference type="PANTHER" id="PTHR14226">
    <property type="entry name" value="NEUROPATHY TARGET ESTERASE/SWISS CHEESE D.MELANOGASTER"/>
    <property type="match status" value="1"/>
</dbReference>
<dbReference type="Pfam" id="PF00027">
    <property type="entry name" value="cNMP_binding"/>
    <property type="match status" value="3"/>
</dbReference>
<dbReference type="Pfam" id="PF24179">
    <property type="entry name" value="NTE_Ploop"/>
    <property type="match status" value="1"/>
</dbReference>
<dbReference type="Pfam" id="PF01734">
    <property type="entry name" value="Patatin"/>
    <property type="match status" value="1"/>
</dbReference>
<dbReference type="SMART" id="SM00100">
    <property type="entry name" value="cNMP"/>
    <property type="match status" value="3"/>
</dbReference>
<dbReference type="SUPFAM" id="SSF51206">
    <property type="entry name" value="cAMP-binding domain-like"/>
    <property type="match status" value="3"/>
</dbReference>
<dbReference type="SUPFAM" id="SSF52151">
    <property type="entry name" value="FabD/lysophospholipase-like"/>
    <property type="match status" value="2"/>
</dbReference>
<dbReference type="PROSITE" id="PS50042">
    <property type="entry name" value="CNMP_BINDING_3"/>
    <property type="match status" value="3"/>
</dbReference>
<dbReference type="PROSITE" id="PS51635">
    <property type="entry name" value="PNPLA"/>
    <property type="match status" value="1"/>
</dbReference>
<dbReference type="PROSITE" id="PS01237">
    <property type="entry name" value="UPF0028"/>
    <property type="match status" value="1"/>
</dbReference>